<evidence type="ECO:0000255" key="1">
    <source>
        <dbReference type="HAMAP-Rule" id="MF_00011"/>
    </source>
</evidence>
<sequence>MSTLVIVGTQWGDEGKGKITDYLAEKADVVVRYQGGNNAGHTVEKEGVQYKLHLIPSGILYSEKICIIGNGVVVDPASLIEEIENLQKQGISVDNLKISDRAHIVFPYHIKQDELEEISKGKNDLGTTKRGIGPCYMDKSERIGIRVCDLLKPKVFEEKLRRNVEKKNKLFKELYGAEGFDFEEMYQKYLEYAEKIKPFVTDTTVLLYDLIKSGKKVLFEGAQGTLLDLDLGTYPYVTASHPIAGGVTVGAGIGPTMIDEVMGVVKAYTTRVGKGPFPTELFDENGEFLREKGHEYGTTTGRARRCGWLDAVILKYSVRVSGITHFALTKLDTLTGLKKIKICTGYKFNGRIITDFPASLEDLAQCEPVYEEFDGWEEDIQGAKTFDDLPYNAQKYIRRIEELIGIKAAIISVGPERNQTIVLRDF</sequence>
<protein>
    <recommendedName>
        <fullName evidence="1">Adenylosuccinate synthetase</fullName>
        <shortName evidence="1">AMPSase</shortName>
        <shortName evidence="1">AdSS</shortName>
        <ecNumber evidence="1">6.3.4.4</ecNumber>
    </recommendedName>
    <alternativeName>
        <fullName evidence="1">IMP--aspartate ligase</fullName>
    </alternativeName>
</protein>
<keyword id="KW-0963">Cytoplasm</keyword>
<keyword id="KW-0342">GTP-binding</keyword>
<keyword id="KW-0436">Ligase</keyword>
<keyword id="KW-0460">Magnesium</keyword>
<keyword id="KW-0479">Metal-binding</keyword>
<keyword id="KW-0547">Nucleotide-binding</keyword>
<keyword id="KW-0658">Purine biosynthesis</keyword>
<keyword id="KW-1185">Reference proteome</keyword>
<reference key="1">
    <citation type="submission" date="2008-01" db="EMBL/GenBank/DDBJ databases">
        <title>Complete sequence of Thermoanaerobacter pseudethanolicus 39E.</title>
        <authorList>
            <person name="Copeland A."/>
            <person name="Lucas S."/>
            <person name="Lapidus A."/>
            <person name="Barry K."/>
            <person name="Glavina del Rio T."/>
            <person name="Dalin E."/>
            <person name="Tice H."/>
            <person name="Pitluck S."/>
            <person name="Bruce D."/>
            <person name="Goodwin L."/>
            <person name="Saunders E."/>
            <person name="Brettin T."/>
            <person name="Detter J.C."/>
            <person name="Han C."/>
            <person name="Schmutz J."/>
            <person name="Larimer F."/>
            <person name="Land M."/>
            <person name="Hauser L."/>
            <person name="Kyrpides N."/>
            <person name="Lykidis A."/>
            <person name="Hemme C."/>
            <person name="Fields M.W."/>
            <person name="He Z."/>
            <person name="Zhou J."/>
            <person name="Richardson P."/>
        </authorList>
    </citation>
    <scope>NUCLEOTIDE SEQUENCE [LARGE SCALE GENOMIC DNA]</scope>
    <source>
        <strain>ATCC 33223 / DSM 2355 / 39E</strain>
    </source>
</reference>
<organism>
    <name type="scientific">Thermoanaerobacter pseudethanolicus (strain ATCC 33223 / 39E)</name>
    <name type="common">Clostridium thermohydrosulfuricum</name>
    <dbReference type="NCBI Taxonomy" id="340099"/>
    <lineage>
        <taxon>Bacteria</taxon>
        <taxon>Bacillati</taxon>
        <taxon>Bacillota</taxon>
        <taxon>Clostridia</taxon>
        <taxon>Thermoanaerobacterales</taxon>
        <taxon>Thermoanaerobacteraceae</taxon>
        <taxon>Thermoanaerobacter</taxon>
    </lineage>
</organism>
<proteinExistence type="inferred from homology"/>
<comment type="function">
    <text evidence="1">Plays an important role in the de novo pathway of purine nucleotide biosynthesis. Catalyzes the first committed step in the biosynthesis of AMP from IMP.</text>
</comment>
<comment type="catalytic activity">
    <reaction evidence="1">
        <text>IMP + L-aspartate + GTP = N(6)-(1,2-dicarboxyethyl)-AMP + GDP + phosphate + 2 H(+)</text>
        <dbReference type="Rhea" id="RHEA:15753"/>
        <dbReference type="ChEBI" id="CHEBI:15378"/>
        <dbReference type="ChEBI" id="CHEBI:29991"/>
        <dbReference type="ChEBI" id="CHEBI:37565"/>
        <dbReference type="ChEBI" id="CHEBI:43474"/>
        <dbReference type="ChEBI" id="CHEBI:57567"/>
        <dbReference type="ChEBI" id="CHEBI:58053"/>
        <dbReference type="ChEBI" id="CHEBI:58189"/>
        <dbReference type="EC" id="6.3.4.4"/>
    </reaction>
</comment>
<comment type="cofactor">
    <cofactor evidence="1">
        <name>Mg(2+)</name>
        <dbReference type="ChEBI" id="CHEBI:18420"/>
    </cofactor>
    <text evidence="1">Binds 1 Mg(2+) ion per subunit.</text>
</comment>
<comment type="pathway">
    <text evidence="1">Purine metabolism; AMP biosynthesis via de novo pathway; AMP from IMP: step 1/2.</text>
</comment>
<comment type="subunit">
    <text evidence="1">Homodimer.</text>
</comment>
<comment type="subcellular location">
    <subcellularLocation>
        <location evidence="1">Cytoplasm</location>
    </subcellularLocation>
</comment>
<comment type="similarity">
    <text evidence="1">Belongs to the adenylosuccinate synthetase family.</text>
</comment>
<dbReference type="EC" id="6.3.4.4" evidence="1"/>
<dbReference type="EMBL" id="CP000924">
    <property type="protein sequence ID" value="ABY95869.1"/>
    <property type="molecule type" value="Genomic_DNA"/>
</dbReference>
<dbReference type="RefSeq" id="WP_009052093.1">
    <property type="nucleotide sequence ID" value="NC_010321.1"/>
</dbReference>
<dbReference type="SMR" id="B0K8D7"/>
<dbReference type="STRING" id="340099.Teth39_2248"/>
<dbReference type="KEGG" id="tpd:Teth39_2248"/>
<dbReference type="eggNOG" id="COG0104">
    <property type="taxonomic scope" value="Bacteria"/>
</dbReference>
<dbReference type="HOGENOM" id="CLU_029848_0_0_9"/>
<dbReference type="UniPathway" id="UPA00075">
    <property type="reaction ID" value="UER00335"/>
</dbReference>
<dbReference type="Proteomes" id="UP000002156">
    <property type="component" value="Chromosome"/>
</dbReference>
<dbReference type="GO" id="GO:0005737">
    <property type="term" value="C:cytoplasm"/>
    <property type="evidence" value="ECO:0007669"/>
    <property type="project" value="UniProtKB-SubCell"/>
</dbReference>
<dbReference type="GO" id="GO:0004019">
    <property type="term" value="F:adenylosuccinate synthase activity"/>
    <property type="evidence" value="ECO:0007669"/>
    <property type="project" value="UniProtKB-UniRule"/>
</dbReference>
<dbReference type="GO" id="GO:0005525">
    <property type="term" value="F:GTP binding"/>
    <property type="evidence" value="ECO:0007669"/>
    <property type="project" value="UniProtKB-UniRule"/>
</dbReference>
<dbReference type="GO" id="GO:0000287">
    <property type="term" value="F:magnesium ion binding"/>
    <property type="evidence" value="ECO:0007669"/>
    <property type="project" value="UniProtKB-UniRule"/>
</dbReference>
<dbReference type="GO" id="GO:0044208">
    <property type="term" value="P:'de novo' AMP biosynthetic process"/>
    <property type="evidence" value="ECO:0007669"/>
    <property type="project" value="UniProtKB-UniRule"/>
</dbReference>
<dbReference type="GO" id="GO:0046040">
    <property type="term" value="P:IMP metabolic process"/>
    <property type="evidence" value="ECO:0007669"/>
    <property type="project" value="TreeGrafter"/>
</dbReference>
<dbReference type="CDD" id="cd03108">
    <property type="entry name" value="AdSS"/>
    <property type="match status" value="1"/>
</dbReference>
<dbReference type="FunFam" id="1.10.300.10:FF:000001">
    <property type="entry name" value="Adenylosuccinate synthetase"/>
    <property type="match status" value="1"/>
</dbReference>
<dbReference type="FunFam" id="3.90.170.10:FF:000001">
    <property type="entry name" value="Adenylosuccinate synthetase"/>
    <property type="match status" value="1"/>
</dbReference>
<dbReference type="Gene3D" id="3.40.440.10">
    <property type="entry name" value="Adenylosuccinate Synthetase, subunit A, domain 1"/>
    <property type="match status" value="1"/>
</dbReference>
<dbReference type="Gene3D" id="1.10.300.10">
    <property type="entry name" value="Adenylosuccinate Synthetase, subunit A, domain 2"/>
    <property type="match status" value="1"/>
</dbReference>
<dbReference type="Gene3D" id="3.90.170.10">
    <property type="entry name" value="Adenylosuccinate Synthetase, subunit A, domain 3"/>
    <property type="match status" value="1"/>
</dbReference>
<dbReference type="HAMAP" id="MF_00011">
    <property type="entry name" value="Adenylosucc_synth"/>
    <property type="match status" value="1"/>
</dbReference>
<dbReference type="InterPro" id="IPR018220">
    <property type="entry name" value="Adenylosuccin_syn_GTP-bd"/>
</dbReference>
<dbReference type="InterPro" id="IPR033128">
    <property type="entry name" value="Adenylosuccin_syn_Lys_AS"/>
</dbReference>
<dbReference type="InterPro" id="IPR042109">
    <property type="entry name" value="Adenylosuccinate_synth_dom1"/>
</dbReference>
<dbReference type="InterPro" id="IPR042110">
    <property type="entry name" value="Adenylosuccinate_synth_dom2"/>
</dbReference>
<dbReference type="InterPro" id="IPR042111">
    <property type="entry name" value="Adenylosuccinate_synth_dom3"/>
</dbReference>
<dbReference type="InterPro" id="IPR001114">
    <property type="entry name" value="Adenylosuccinate_synthetase"/>
</dbReference>
<dbReference type="InterPro" id="IPR027417">
    <property type="entry name" value="P-loop_NTPase"/>
</dbReference>
<dbReference type="NCBIfam" id="NF002223">
    <property type="entry name" value="PRK01117.1"/>
    <property type="match status" value="1"/>
</dbReference>
<dbReference type="NCBIfam" id="NF010355">
    <property type="entry name" value="PRK13783.1"/>
    <property type="match status" value="1"/>
</dbReference>
<dbReference type="NCBIfam" id="TIGR00184">
    <property type="entry name" value="purA"/>
    <property type="match status" value="1"/>
</dbReference>
<dbReference type="PANTHER" id="PTHR11846">
    <property type="entry name" value="ADENYLOSUCCINATE SYNTHETASE"/>
    <property type="match status" value="1"/>
</dbReference>
<dbReference type="PANTHER" id="PTHR11846:SF0">
    <property type="entry name" value="ADENYLOSUCCINATE SYNTHETASE"/>
    <property type="match status" value="1"/>
</dbReference>
<dbReference type="Pfam" id="PF00709">
    <property type="entry name" value="Adenylsucc_synt"/>
    <property type="match status" value="1"/>
</dbReference>
<dbReference type="SMART" id="SM00788">
    <property type="entry name" value="Adenylsucc_synt"/>
    <property type="match status" value="1"/>
</dbReference>
<dbReference type="SUPFAM" id="SSF52540">
    <property type="entry name" value="P-loop containing nucleoside triphosphate hydrolases"/>
    <property type="match status" value="1"/>
</dbReference>
<dbReference type="PROSITE" id="PS01266">
    <property type="entry name" value="ADENYLOSUCCIN_SYN_1"/>
    <property type="match status" value="1"/>
</dbReference>
<dbReference type="PROSITE" id="PS00513">
    <property type="entry name" value="ADENYLOSUCCIN_SYN_2"/>
    <property type="match status" value="1"/>
</dbReference>
<accession>B0K8D7</accession>
<name>PURA_THEP3</name>
<feature type="chain" id="PRO_1000089347" description="Adenylosuccinate synthetase">
    <location>
        <begin position="1"/>
        <end position="426"/>
    </location>
</feature>
<feature type="active site" description="Proton acceptor" evidence="1">
    <location>
        <position position="13"/>
    </location>
</feature>
<feature type="active site" description="Proton donor" evidence="1">
    <location>
        <position position="41"/>
    </location>
</feature>
<feature type="binding site" evidence="1">
    <location>
        <begin position="12"/>
        <end position="18"/>
    </location>
    <ligand>
        <name>GTP</name>
        <dbReference type="ChEBI" id="CHEBI:37565"/>
    </ligand>
</feature>
<feature type="binding site" description="in other chain" evidence="1">
    <location>
        <begin position="13"/>
        <end position="16"/>
    </location>
    <ligand>
        <name>IMP</name>
        <dbReference type="ChEBI" id="CHEBI:58053"/>
        <note>ligand shared between dimeric partners</note>
    </ligand>
</feature>
<feature type="binding site" evidence="1">
    <location>
        <position position="13"/>
    </location>
    <ligand>
        <name>Mg(2+)</name>
        <dbReference type="ChEBI" id="CHEBI:18420"/>
    </ligand>
</feature>
<feature type="binding site" description="in other chain" evidence="1">
    <location>
        <begin position="38"/>
        <end position="41"/>
    </location>
    <ligand>
        <name>IMP</name>
        <dbReference type="ChEBI" id="CHEBI:58053"/>
        <note>ligand shared between dimeric partners</note>
    </ligand>
</feature>
<feature type="binding site" evidence="1">
    <location>
        <begin position="40"/>
        <end position="42"/>
    </location>
    <ligand>
        <name>GTP</name>
        <dbReference type="ChEBI" id="CHEBI:37565"/>
    </ligand>
</feature>
<feature type="binding site" evidence="1">
    <location>
        <position position="40"/>
    </location>
    <ligand>
        <name>Mg(2+)</name>
        <dbReference type="ChEBI" id="CHEBI:18420"/>
    </ligand>
</feature>
<feature type="binding site" description="in other chain" evidence="1">
    <location>
        <position position="128"/>
    </location>
    <ligand>
        <name>IMP</name>
        <dbReference type="ChEBI" id="CHEBI:58053"/>
        <note>ligand shared between dimeric partners</note>
    </ligand>
</feature>
<feature type="binding site" evidence="1">
    <location>
        <position position="142"/>
    </location>
    <ligand>
        <name>IMP</name>
        <dbReference type="ChEBI" id="CHEBI:58053"/>
        <note>ligand shared between dimeric partners</note>
    </ligand>
</feature>
<feature type="binding site" description="in other chain" evidence="1">
    <location>
        <position position="223"/>
    </location>
    <ligand>
        <name>IMP</name>
        <dbReference type="ChEBI" id="CHEBI:58053"/>
        <note>ligand shared between dimeric partners</note>
    </ligand>
</feature>
<feature type="binding site" description="in other chain" evidence="1">
    <location>
        <position position="238"/>
    </location>
    <ligand>
        <name>IMP</name>
        <dbReference type="ChEBI" id="CHEBI:58053"/>
        <note>ligand shared between dimeric partners</note>
    </ligand>
</feature>
<feature type="binding site" evidence="1">
    <location>
        <begin position="298"/>
        <end position="304"/>
    </location>
    <ligand>
        <name>substrate</name>
    </ligand>
</feature>
<feature type="binding site" description="in other chain" evidence="1">
    <location>
        <position position="302"/>
    </location>
    <ligand>
        <name>IMP</name>
        <dbReference type="ChEBI" id="CHEBI:58053"/>
        <note>ligand shared between dimeric partners</note>
    </ligand>
</feature>
<feature type="binding site" evidence="1">
    <location>
        <position position="304"/>
    </location>
    <ligand>
        <name>GTP</name>
        <dbReference type="ChEBI" id="CHEBI:37565"/>
    </ligand>
</feature>
<feature type="binding site" evidence="1">
    <location>
        <begin position="330"/>
        <end position="332"/>
    </location>
    <ligand>
        <name>GTP</name>
        <dbReference type="ChEBI" id="CHEBI:37565"/>
    </ligand>
</feature>
<feature type="binding site" evidence="1">
    <location>
        <begin position="412"/>
        <end position="414"/>
    </location>
    <ligand>
        <name>GTP</name>
        <dbReference type="ChEBI" id="CHEBI:37565"/>
    </ligand>
</feature>
<gene>
    <name evidence="1" type="primary">purA</name>
    <name type="ordered locus">Teth39_2248</name>
</gene>